<keyword id="KW-0028">Amino-acid biosynthesis</keyword>
<keyword id="KW-0057">Aromatic amino acid biosynthesis</keyword>
<keyword id="KW-0963">Cytoplasm</keyword>
<keyword id="KW-0808">Transferase</keyword>
<sequence length="429" mass="45299">MKERTIQPVNNGLNGNITIPGDKSISHRAVMFGAIAEGKTTIKGFLPGADCLSTISCFKEMGVDIVQNGDEVTVVGKGLEGLQEPKAVLDVGNSGTTIRLMSGILANTPFFSCVQGDASIAKRPMKRVTNPLKQMGANIDGREEGTFTPLTIRGGDLKAIEYTSPVASAQVKSAILLAGLRAEGVTAVTEPHISRDHTERMLEAFGVKVTREGKTVKLAGGQKLTATDVQVPGDVSSAAFFLVAGAIIPNSKLVLQNVGMNPTRTGIIDVLEKMDATFTVEPINEGASEPAANITIETSSLKGIEIGGDIIPRLIDEIPVIALAATQAEGITVIKDAHELKVKETNRIDTVVAELTKLGARIEATDDGMIIYGKSALKGNTVNSYGDHRIGMMLAIAGCLAEGKTTIEDAEAVGVSYPTFFEELQRLTK</sequence>
<gene>
    <name evidence="1" type="primary">aroA</name>
    <name type="ordered locus">BCAH187_A3000</name>
</gene>
<organism>
    <name type="scientific">Bacillus cereus (strain AH187)</name>
    <dbReference type="NCBI Taxonomy" id="405534"/>
    <lineage>
        <taxon>Bacteria</taxon>
        <taxon>Bacillati</taxon>
        <taxon>Bacillota</taxon>
        <taxon>Bacilli</taxon>
        <taxon>Bacillales</taxon>
        <taxon>Bacillaceae</taxon>
        <taxon>Bacillus</taxon>
        <taxon>Bacillus cereus group</taxon>
    </lineage>
</organism>
<protein>
    <recommendedName>
        <fullName evidence="1">3-phosphoshikimate 1-carboxyvinyltransferase</fullName>
        <ecNumber evidence="1">2.5.1.19</ecNumber>
    </recommendedName>
    <alternativeName>
        <fullName evidence="1">5-enolpyruvylshikimate-3-phosphate synthase</fullName>
        <shortName evidence="1">EPSP synthase</shortName>
        <shortName evidence="1">EPSPS</shortName>
    </alternativeName>
</protein>
<evidence type="ECO:0000255" key="1">
    <source>
        <dbReference type="HAMAP-Rule" id="MF_00210"/>
    </source>
</evidence>
<reference key="1">
    <citation type="submission" date="2008-10" db="EMBL/GenBank/DDBJ databases">
        <title>Genome sequence of Bacillus cereus AH187.</title>
        <authorList>
            <person name="Dodson R.J."/>
            <person name="Durkin A.S."/>
            <person name="Rosovitz M.J."/>
            <person name="Rasko D.A."/>
            <person name="Kolsto A.B."/>
            <person name="Okstad O.A."/>
            <person name="Ravel J."/>
            <person name="Sutton G."/>
        </authorList>
    </citation>
    <scope>NUCLEOTIDE SEQUENCE [LARGE SCALE GENOMIC DNA]</scope>
    <source>
        <strain>AH187</strain>
    </source>
</reference>
<dbReference type="EC" id="2.5.1.19" evidence="1"/>
<dbReference type="EMBL" id="CP001177">
    <property type="protein sequence ID" value="ACJ77163.1"/>
    <property type="molecule type" value="Genomic_DNA"/>
</dbReference>
<dbReference type="SMR" id="B7HVH9"/>
<dbReference type="KEGG" id="bcr:BCAH187_A3000"/>
<dbReference type="HOGENOM" id="CLU_024321_0_1_9"/>
<dbReference type="UniPathway" id="UPA00053">
    <property type="reaction ID" value="UER00089"/>
</dbReference>
<dbReference type="Proteomes" id="UP000002214">
    <property type="component" value="Chromosome"/>
</dbReference>
<dbReference type="GO" id="GO:0005737">
    <property type="term" value="C:cytoplasm"/>
    <property type="evidence" value="ECO:0007669"/>
    <property type="project" value="UniProtKB-SubCell"/>
</dbReference>
<dbReference type="GO" id="GO:0003866">
    <property type="term" value="F:3-phosphoshikimate 1-carboxyvinyltransferase activity"/>
    <property type="evidence" value="ECO:0007669"/>
    <property type="project" value="UniProtKB-UniRule"/>
</dbReference>
<dbReference type="GO" id="GO:0008652">
    <property type="term" value="P:amino acid biosynthetic process"/>
    <property type="evidence" value="ECO:0007669"/>
    <property type="project" value="UniProtKB-KW"/>
</dbReference>
<dbReference type="GO" id="GO:0009073">
    <property type="term" value="P:aromatic amino acid family biosynthetic process"/>
    <property type="evidence" value="ECO:0007669"/>
    <property type="project" value="UniProtKB-KW"/>
</dbReference>
<dbReference type="GO" id="GO:0009423">
    <property type="term" value="P:chorismate biosynthetic process"/>
    <property type="evidence" value="ECO:0007669"/>
    <property type="project" value="UniProtKB-UniRule"/>
</dbReference>
<dbReference type="CDD" id="cd01556">
    <property type="entry name" value="EPSP_synthase"/>
    <property type="match status" value="1"/>
</dbReference>
<dbReference type="FunFam" id="3.65.10.10:FF:000005">
    <property type="entry name" value="3-phosphoshikimate 1-carboxyvinyltransferase"/>
    <property type="match status" value="1"/>
</dbReference>
<dbReference type="Gene3D" id="3.65.10.10">
    <property type="entry name" value="Enolpyruvate transferase domain"/>
    <property type="match status" value="2"/>
</dbReference>
<dbReference type="HAMAP" id="MF_00210">
    <property type="entry name" value="EPSP_synth"/>
    <property type="match status" value="1"/>
</dbReference>
<dbReference type="InterPro" id="IPR001986">
    <property type="entry name" value="Enolpyruvate_Tfrase_dom"/>
</dbReference>
<dbReference type="InterPro" id="IPR036968">
    <property type="entry name" value="Enolpyruvate_Tfrase_sf"/>
</dbReference>
<dbReference type="InterPro" id="IPR006264">
    <property type="entry name" value="EPSP_synthase"/>
</dbReference>
<dbReference type="InterPro" id="IPR023193">
    <property type="entry name" value="EPSP_synthase_CS"/>
</dbReference>
<dbReference type="InterPro" id="IPR013792">
    <property type="entry name" value="RNA3'P_cycl/enolpyr_Trfase_a/b"/>
</dbReference>
<dbReference type="NCBIfam" id="TIGR01356">
    <property type="entry name" value="aroA"/>
    <property type="match status" value="1"/>
</dbReference>
<dbReference type="PANTHER" id="PTHR21090">
    <property type="entry name" value="AROM/DEHYDROQUINATE SYNTHASE"/>
    <property type="match status" value="1"/>
</dbReference>
<dbReference type="PANTHER" id="PTHR21090:SF5">
    <property type="entry name" value="PENTAFUNCTIONAL AROM POLYPEPTIDE"/>
    <property type="match status" value="1"/>
</dbReference>
<dbReference type="Pfam" id="PF00275">
    <property type="entry name" value="EPSP_synthase"/>
    <property type="match status" value="1"/>
</dbReference>
<dbReference type="PIRSF" id="PIRSF000505">
    <property type="entry name" value="EPSPS"/>
    <property type="match status" value="1"/>
</dbReference>
<dbReference type="SUPFAM" id="SSF55205">
    <property type="entry name" value="EPT/RTPC-like"/>
    <property type="match status" value="1"/>
</dbReference>
<dbReference type="PROSITE" id="PS00104">
    <property type="entry name" value="EPSP_SYNTHASE_1"/>
    <property type="match status" value="1"/>
</dbReference>
<dbReference type="PROSITE" id="PS00885">
    <property type="entry name" value="EPSP_SYNTHASE_2"/>
    <property type="match status" value="1"/>
</dbReference>
<accession>B7HVH9</accession>
<feature type="chain" id="PRO_1000118778" description="3-phosphoshikimate 1-carboxyvinyltransferase">
    <location>
        <begin position="1"/>
        <end position="429"/>
    </location>
</feature>
<feature type="active site" description="Proton acceptor" evidence="1">
    <location>
        <position position="316"/>
    </location>
</feature>
<feature type="binding site" evidence="1">
    <location>
        <position position="23"/>
    </location>
    <ligand>
        <name>3-phosphoshikimate</name>
        <dbReference type="ChEBI" id="CHEBI:145989"/>
    </ligand>
</feature>
<feature type="binding site" evidence="1">
    <location>
        <position position="23"/>
    </location>
    <ligand>
        <name>phosphoenolpyruvate</name>
        <dbReference type="ChEBI" id="CHEBI:58702"/>
    </ligand>
</feature>
<feature type="binding site" evidence="1">
    <location>
        <position position="24"/>
    </location>
    <ligand>
        <name>3-phosphoshikimate</name>
        <dbReference type="ChEBI" id="CHEBI:145989"/>
    </ligand>
</feature>
<feature type="binding site" evidence="1">
    <location>
        <position position="28"/>
    </location>
    <ligand>
        <name>3-phosphoshikimate</name>
        <dbReference type="ChEBI" id="CHEBI:145989"/>
    </ligand>
</feature>
<feature type="binding site" evidence="1">
    <location>
        <position position="95"/>
    </location>
    <ligand>
        <name>phosphoenolpyruvate</name>
        <dbReference type="ChEBI" id="CHEBI:58702"/>
    </ligand>
</feature>
<feature type="binding site" evidence="1">
    <location>
        <position position="123"/>
    </location>
    <ligand>
        <name>phosphoenolpyruvate</name>
        <dbReference type="ChEBI" id="CHEBI:58702"/>
    </ligand>
</feature>
<feature type="binding site" evidence="1">
    <location>
        <position position="168"/>
    </location>
    <ligand>
        <name>3-phosphoshikimate</name>
        <dbReference type="ChEBI" id="CHEBI:145989"/>
    </ligand>
</feature>
<feature type="binding site" evidence="1">
    <location>
        <position position="170"/>
    </location>
    <ligand>
        <name>3-phosphoshikimate</name>
        <dbReference type="ChEBI" id="CHEBI:145989"/>
    </ligand>
</feature>
<feature type="binding site" evidence="1">
    <location>
        <position position="170"/>
    </location>
    <ligand>
        <name>phosphoenolpyruvate</name>
        <dbReference type="ChEBI" id="CHEBI:58702"/>
    </ligand>
</feature>
<feature type="binding site" evidence="1">
    <location>
        <position position="316"/>
    </location>
    <ligand>
        <name>3-phosphoshikimate</name>
        <dbReference type="ChEBI" id="CHEBI:145989"/>
    </ligand>
</feature>
<feature type="binding site" evidence="1">
    <location>
        <position position="343"/>
    </location>
    <ligand>
        <name>3-phosphoshikimate</name>
        <dbReference type="ChEBI" id="CHEBI:145989"/>
    </ligand>
</feature>
<feature type="binding site" evidence="1">
    <location>
        <position position="347"/>
    </location>
    <ligand>
        <name>phosphoenolpyruvate</name>
        <dbReference type="ChEBI" id="CHEBI:58702"/>
    </ligand>
</feature>
<feature type="binding site" evidence="1">
    <location>
        <position position="389"/>
    </location>
    <ligand>
        <name>phosphoenolpyruvate</name>
        <dbReference type="ChEBI" id="CHEBI:58702"/>
    </ligand>
</feature>
<proteinExistence type="inferred from homology"/>
<comment type="function">
    <text evidence="1">Catalyzes the transfer of the enolpyruvyl moiety of phosphoenolpyruvate (PEP) to the 5-hydroxyl of shikimate-3-phosphate (S3P) to produce enolpyruvyl shikimate-3-phosphate and inorganic phosphate.</text>
</comment>
<comment type="catalytic activity">
    <reaction evidence="1">
        <text>3-phosphoshikimate + phosphoenolpyruvate = 5-O-(1-carboxyvinyl)-3-phosphoshikimate + phosphate</text>
        <dbReference type="Rhea" id="RHEA:21256"/>
        <dbReference type="ChEBI" id="CHEBI:43474"/>
        <dbReference type="ChEBI" id="CHEBI:57701"/>
        <dbReference type="ChEBI" id="CHEBI:58702"/>
        <dbReference type="ChEBI" id="CHEBI:145989"/>
        <dbReference type="EC" id="2.5.1.19"/>
    </reaction>
    <physiologicalReaction direction="left-to-right" evidence="1">
        <dbReference type="Rhea" id="RHEA:21257"/>
    </physiologicalReaction>
</comment>
<comment type="pathway">
    <text evidence="1">Metabolic intermediate biosynthesis; chorismate biosynthesis; chorismate from D-erythrose 4-phosphate and phosphoenolpyruvate: step 6/7.</text>
</comment>
<comment type="subunit">
    <text evidence="1">Monomer.</text>
</comment>
<comment type="subcellular location">
    <subcellularLocation>
        <location evidence="1">Cytoplasm</location>
    </subcellularLocation>
</comment>
<comment type="similarity">
    <text evidence="1">Belongs to the EPSP synthase family.</text>
</comment>
<name>AROA_BACC7</name>